<name>USP3_PINMG</name>
<keyword id="KW-0903">Direct protein sequencing</keyword>
<keyword id="KW-0964">Secreted</keyword>
<keyword id="KW-0732">Signal</keyword>
<feature type="signal peptide" evidence="1">
    <location>
        <begin position="1"/>
        <end position="21"/>
    </location>
</feature>
<feature type="chain" id="PRO_0000417923" description="Uncharacterized shell protein 3" evidence="1">
    <location>
        <begin position="22"/>
        <end position="109"/>
    </location>
</feature>
<sequence>MEKSICTSVLVLGLFISSAIGQFCPRDRYEFPPIQCKTHADCGYRSFCEPSGTISRCCTKCPIGTIMVYPRCNWPSPGGCPPFSTCENDPVGLGRFAAVCCSRPYPFYG</sequence>
<organism>
    <name type="scientific">Margaritifera margaritifera</name>
    <name type="common">Freshwater pearl mussel</name>
    <dbReference type="NCBI Taxonomy" id="102329"/>
    <lineage>
        <taxon>Eukaryota</taxon>
        <taxon>Metazoa</taxon>
        <taxon>Spiralia</taxon>
        <taxon>Lophotrochozoa</taxon>
        <taxon>Mollusca</taxon>
        <taxon>Bivalvia</taxon>
        <taxon>Autobranchia</taxon>
        <taxon>Pteriomorphia</taxon>
        <taxon>Pterioida</taxon>
        <taxon>Pterioidea</taxon>
        <taxon>Pteriidae</taxon>
        <taxon>Pinctada</taxon>
    </lineage>
</organism>
<comment type="subcellular location">
    <subcellularLocation>
        <location evidence="2">Secreted</location>
    </subcellularLocation>
</comment>
<comment type="tissue specificity">
    <text evidence="2">Prismatic layer of shell (at protein level). Expressed primarily in the mantle with highest level in the mantle edge and lower level in the mantle pallium.</text>
</comment>
<dbReference type="EMBL" id="HE610395">
    <property type="protein sequence ID" value="CCE46169.1"/>
    <property type="molecule type" value="mRNA"/>
</dbReference>
<dbReference type="GO" id="GO:0005576">
    <property type="term" value="C:extracellular region"/>
    <property type="evidence" value="ECO:0007669"/>
    <property type="project" value="UniProtKB-SubCell"/>
</dbReference>
<dbReference type="InterPro" id="IPR001368">
    <property type="entry name" value="TNFR/NGFR_Cys_rich_reg"/>
</dbReference>
<dbReference type="PROSITE" id="PS00652">
    <property type="entry name" value="TNFR_NGFR_1"/>
    <property type="match status" value="1"/>
</dbReference>
<proteinExistence type="evidence at protein level"/>
<protein>
    <recommendedName>
        <fullName>Uncharacterized shell protein 3</fullName>
    </recommendedName>
    <alternativeName>
        <fullName>Prism uncharacterized shell protein 17</fullName>
        <shortName>PUSP17</shortName>
    </alternativeName>
</protein>
<reference evidence="3" key="1">
    <citation type="journal article" date="2010" name="BMC Genomics">
        <title>Transcriptome and proteome analysis of Pinctada margaritifera calcifying mantle and shell: focus on biomineralization.</title>
        <authorList>
            <person name="Joubert C."/>
            <person name="Piquemal D."/>
            <person name="Marie B."/>
            <person name="Manchon L."/>
            <person name="Pierrat F."/>
            <person name="Zanella-Cleon I."/>
            <person name="Cochennec-Laureau N."/>
            <person name="Gueguen Y."/>
            <person name="Montagnani C."/>
        </authorList>
    </citation>
    <scope>NUCLEOTIDE SEQUENCE [MRNA]</scope>
    <scope>IDENTIFICATION</scope>
    <source>
        <tissue>Mantle</tissue>
    </source>
</reference>
<reference key="2">
    <citation type="journal article" date="2012" name="Proc. Natl. Acad. Sci. U.S.A.">
        <title>Different secretory repertoires control the biomineralization processes of prism and nacre deposition of the pearl oyster shell.</title>
        <authorList>
            <person name="Marie B."/>
            <person name="Joubert C."/>
            <person name="Tayale A."/>
            <person name="Zanella-Cleon I."/>
            <person name="Belliard C."/>
            <person name="Piquemal D."/>
            <person name="Cochennec-Laureau N."/>
            <person name="Marin F."/>
            <person name="Gueguen Y."/>
            <person name="Montagnani C."/>
        </authorList>
    </citation>
    <scope>PROTEIN SEQUENCE OF 46-56</scope>
    <scope>SUBCELLULAR LOCATION</scope>
    <scope>TISSUE SPECIFICITY</scope>
    <source>
        <tissue>Shell</tissue>
    </source>
</reference>
<accession>H2A0M8</accession>
<evidence type="ECO:0000255" key="1"/>
<evidence type="ECO:0000269" key="2">
    <source>
    </source>
</evidence>
<evidence type="ECO:0000305" key="3"/>